<keyword id="KW-0325">Glycoprotein</keyword>
<keyword id="KW-0378">Hydrolase</keyword>
<keyword id="KW-0645">Protease</keyword>
<keyword id="KW-0964">Secreted</keyword>
<keyword id="KW-0720">Serine protease</keyword>
<keyword id="KW-0732">Signal</keyword>
<keyword id="KW-0843">Virulence</keyword>
<keyword id="KW-0865">Zymogen</keyword>
<protein>
    <recommendedName>
        <fullName>Subtilisin-like protease 6</fullName>
        <ecNumber>3.4.21.-</ecNumber>
    </recommendedName>
</protein>
<feature type="signal peptide" evidence="2">
    <location>
        <begin position="1"/>
        <end position="20"/>
    </location>
</feature>
<feature type="propeptide" id="PRO_0000380806" evidence="2">
    <location>
        <begin position="21"/>
        <end position="127"/>
    </location>
</feature>
<feature type="chain" id="PRO_0000380807" description="Subtilisin-like protease 6">
    <location>
        <begin position="128"/>
        <end position="412"/>
    </location>
</feature>
<feature type="domain" description="Inhibitor I9" evidence="2">
    <location>
        <begin position="36"/>
        <end position="120"/>
    </location>
</feature>
<feature type="domain" description="Peptidase S8" evidence="3">
    <location>
        <begin position="135"/>
        <end position="412"/>
    </location>
</feature>
<feature type="active site" description="Charge relay system" evidence="3">
    <location>
        <position position="167"/>
    </location>
</feature>
<feature type="active site" description="Charge relay system" evidence="3">
    <location>
        <position position="198"/>
    </location>
</feature>
<feature type="active site" description="Charge relay system" evidence="3">
    <location>
        <position position="358"/>
    </location>
</feature>
<feature type="glycosylation site" description="N-linked (GlcNAc...) asparagine" evidence="2">
    <location>
        <position position="123"/>
    </location>
</feature>
<feature type="glycosylation site" description="N-linked (GlcNAc...) asparagine" evidence="2">
    <location>
        <position position="126"/>
    </location>
</feature>
<feature type="glycosylation site" description="N-linked (GlcNAc...) asparagine" evidence="2">
    <location>
        <position position="252"/>
    </location>
</feature>
<feature type="glycosylation site" description="N-linked (GlcNAc...) asparagine" evidence="2">
    <location>
        <position position="264"/>
    </location>
</feature>
<feature type="glycosylation site" description="N-linked (GlcNAc...) asparagine" evidence="2">
    <location>
        <position position="408"/>
    </location>
</feature>
<name>SUB6_ARTBE</name>
<proteinExistence type="inferred from homology"/>
<sequence length="412" mass="42735">MGFITKAIPIVLAALSTVNGARILEAGPHAETIPNKYIVVMKKDVSEEAFSAHTTWLSQTLNSRLMRRAGSSKPMAGMQDKYSLGNVFRAYSGEFDEAMIKDISGHDDVDFIEPDFVVRTTTNGTNLTHQDNVPSWGLARVGSKQAGGTTYYYDPSAGKGVRAYIIDTGIDTDHKDFGGRAKWGKNFADDMDQDCNGHGTHVAGTVGGTQYGLAKSVSLIAVKVLDCEGSGSNSGVIKGMEWAMRDASGGGNGTAKAAGKTVMNMSLGGPRSEATNQAAKAISDAGIFLAVAAGNENMDAQHSSPASEPSVCTVAASTKDDGKASFSNYGSAVDVYAPGKDITSLKPGGSTDTLSGTSMASPHVCGLGAYLIGLGKQGGPGLCDTIKEMANDAIQSPGEDTTSKLIYNGSGK</sequence>
<reference key="1">
    <citation type="journal article" date="2004" name="Gene">
        <title>Secreted subtilisin gene family in Trichophyton rubrum.</title>
        <authorList>
            <person name="Jousson O."/>
            <person name="Lechenne B."/>
            <person name="Bontems O."/>
            <person name="Mignon B."/>
            <person name="Reichard U."/>
            <person name="Barblan J."/>
            <person name="Quadroni M."/>
            <person name="Monod M."/>
        </authorList>
    </citation>
    <scope>NUCLEOTIDE SEQUENCE [GENOMIC DNA]</scope>
</reference>
<gene>
    <name type="primary">SUB6</name>
</gene>
<accession>Q64K31</accession>
<organism>
    <name type="scientific">Arthroderma benhamiae</name>
    <name type="common">Trichophyton mentagrophytes</name>
    <dbReference type="NCBI Taxonomy" id="63400"/>
    <lineage>
        <taxon>Eukaryota</taxon>
        <taxon>Fungi</taxon>
        <taxon>Dikarya</taxon>
        <taxon>Ascomycota</taxon>
        <taxon>Pezizomycotina</taxon>
        <taxon>Eurotiomycetes</taxon>
        <taxon>Eurotiomycetidae</taxon>
        <taxon>Onygenales</taxon>
        <taxon>Arthrodermataceae</taxon>
        <taxon>Trichophyton</taxon>
    </lineage>
</organism>
<comment type="function">
    <text evidence="1">Secreted subtilisin-like serine protease with keratinolytic activity that contributes to pathogenicity.</text>
</comment>
<comment type="subcellular location">
    <subcellularLocation>
        <location evidence="1">Secreted</location>
    </subcellularLocation>
</comment>
<comment type="similarity">
    <text evidence="4">Belongs to the peptidase S8 family.</text>
</comment>
<evidence type="ECO:0000250" key="1"/>
<evidence type="ECO:0000255" key="2"/>
<evidence type="ECO:0000255" key="3">
    <source>
        <dbReference type="PROSITE-ProRule" id="PRU01240"/>
    </source>
</evidence>
<evidence type="ECO:0000305" key="4"/>
<dbReference type="EC" id="3.4.21.-"/>
<dbReference type="EMBL" id="AY437857">
    <property type="protein sequence ID" value="AAS45671.1"/>
    <property type="molecule type" value="Genomic_DNA"/>
</dbReference>
<dbReference type="SMR" id="Q64K31"/>
<dbReference type="GlyCosmos" id="Q64K31">
    <property type="glycosylation" value="5 sites, No reported glycans"/>
</dbReference>
<dbReference type="GO" id="GO:0005576">
    <property type="term" value="C:extracellular region"/>
    <property type="evidence" value="ECO:0007669"/>
    <property type="project" value="UniProtKB-SubCell"/>
</dbReference>
<dbReference type="GO" id="GO:0004252">
    <property type="term" value="F:serine-type endopeptidase activity"/>
    <property type="evidence" value="ECO:0007669"/>
    <property type="project" value="InterPro"/>
</dbReference>
<dbReference type="GO" id="GO:0006508">
    <property type="term" value="P:proteolysis"/>
    <property type="evidence" value="ECO:0007669"/>
    <property type="project" value="UniProtKB-KW"/>
</dbReference>
<dbReference type="CDD" id="cd04077">
    <property type="entry name" value="Peptidases_S8_PCSK9_ProteinaseK_like"/>
    <property type="match status" value="1"/>
</dbReference>
<dbReference type="FunFam" id="3.40.50.200:FF:000014">
    <property type="entry name" value="Proteinase K"/>
    <property type="match status" value="1"/>
</dbReference>
<dbReference type="Gene3D" id="3.30.70.80">
    <property type="entry name" value="Peptidase S8 propeptide/proteinase inhibitor I9"/>
    <property type="match status" value="1"/>
</dbReference>
<dbReference type="Gene3D" id="3.40.50.200">
    <property type="entry name" value="Peptidase S8/S53 domain"/>
    <property type="match status" value="1"/>
</dbReference>
<dbReference type="InterPro" id="IPR034193">
    <property type="entry name" value="PCSK9_ProteinaseK-like"/>
</dbReference>
<dbReference type="InterPro" id="IPR000209">
    <property type="entry name" value="Peptidase_S8/S53_dom"/>
</dbReference>
<dbReference type="InterPro" id="IPR036852">
    <property type="entry name" value="Peptidase_S8/S53_dom_sf"/>
</dbReference>
<dbReference type="InterPro" id="IPR023827">
    <property type="entry name" value="Peptidase_S8_Asp-AS"/>
</dbReference>
<dbReference type="InterPro" id="IPR022398">
    <property type="entry name" value="Peptidase_S8_His-AS"/>
</dbReference>
<dbReference type="InterPro" id="IPR023828">
    <property type="entry name" value="Peptidase_S8_Ser-AS"/>
</dbReference>
<dbReference type="InterPro" id="IPR050131">
    <property type="entry name" value="Peptidase_S8_subtilisin-like"/>
</dbReference>
<dbReference type="InterPro" id="IPR015500">
    <property type="entry name" value="Peptidase_S8_subtilisin-rel"/>
</dbReference>
<dbReference type="InterPro" id="IPR010259">
    <property type="entry name" value="S8pro/Inhibitor_I9"/>
</dbReference>
<dbReference type="InterPro" id="IPR037045">
    <property type="entry name" value="S8pro/Inhibitor_I9_sf"/>
</dbReference>
<dbReference type="PANTHER" id="PTHR43806:SF11">
    <property type="entry name" value="CEREVISIN-RELATED"/>
    <property type="match status" value="1"/>
</dbReference>
<dbReference type="PANTHER" id="PTHR43806">
    <property type="entry name" value="PEPTIDASE S8"/>
    <property type="match status" value="1"/>
</dbReference>
<dbReference type="Pfam" id="PF05922">
    <property type="entry name" value="Inhibitor_I9"/>
    <property type="match status" value="1"/>
</dbReference>
<dbReference type="Pfam" id="PF00082">
    <property type="entry name" value="Peptidase_S8"/>
    <property type="match status" value="1"/>
</dbReference>
<dbReference type="PRINTS" id="PR00723">
    <property type="entry name" value="SUBTILISIN"/>
</dbReference>
<dbReference type="SUPFAM" id="SSF54897">
    <property type="entry name" value="Protease propeptides/inhibitors"/>
    <property type="match status" value="1"/>
</dbReference>
<dbReference type="SUPFAM" id="SSF52743">
    <property type="entry name" value="Subtilisin-like"/>
    <property type="match status" value="1"/>
</dbReference>
<dbReference type="PROSITE" id="PS51892">
    <property type="entry name" value="SUBTILASE"/>
    <property type="match status" value="1"/>
</dbReference>
<dbReference type="PROSITE" id="PS00136">
    <property type="entry name" value="SUBTILASE_ASP"/>
    <property type="match status" value="1"/>
</dbReference>
<dbReference type="PROSITE" id="PS00137">
    <property type="entry name" value="SUBTILASE_HIS"/>
    <property type="match status" value="1"/>
</dbReference>
<dbReference type="PROSITE" id="PS00138">
    <property type="entry name" value="SUBTILASE_SER"/>
    <property type="match status" value="1"/>
</dbReference>